<name>DGTL1_BORPE</name>
<comment type="similarity">
    <text evidence="1">Belongs to the dGTPase family. Type 2 subfamily.</text>
</comment>
<reference key="1">
    <citation type="journal article" date="2003" name="Nat. Genet.">
        <title>Comparative analysis of the genome sequences of Bordetella pertussis, Bordetella parapertussis and Bordetella bronchiseptica.</title>
        <authorList>
            <person name="Parkhill J."/>
            <person name="Sebaihia M."/>
            <person name="Preston A."/>
            <person name="Murphy L.D."/>
            <person name="Thomson N.R."/>
            <person name="Harris D.E."/>
            <person name="Holden M.T.G."/>
            <person name="Churcher C.M."/>
            <person name="Bentley S.D."/>
            <person name="Mungall K.L."/>
            <person name="Cerdeno-Tarraga A.-M."/>
            <person name="Temple L."/>
            <person name="James K.D."/>
            <person name="Harris B."/>
            <person name="Quail M.A."/>
            <person name="Achtman M."/>
            <person name="Atkin R."/>
            <person name="Baker S."/>
            <person name="Basham D."/>
            <person name="Bason N."/>
            <person name="Cherevach I."/>
            <person name="Chillingworth T."/>
            <person name="Collins M."/>
            <person name="Cronin A."/>
            <person name="Davis P."/>
            <person name="Doggett J."/>
            <person name="Feltwell T."/>
            <person name="Goble A."/>
            <person name="Hamlin N."/>
            <person name="Hauser H."/>
            <person name="Holroyd S."/>
            <person name="Jagels K."/>
            <person name="Leather S."/>
            <person name="Moule S."/>
            <person name="Norberczak H."/>
            <person name="O'Neil S."/>
            <person name="Ormond D."/>
            <person name="Price C."/>
            <person name="Rabbinowitsch E."/>
            <person name="Rutter S."/>
            <person name="Sanders M."/>
            <person name="Saunders D."/>
            <person name="Seeger K."/>
            <person name="Sharp S."/>
            <person name="Simmonds M."/>
            <person name="Skelton J."/>
            <person name="Squares R."/>
            <person name="Squares S."/>
            <person name="Stevens K."/>
            <person name="Unwin L."/>
            <person name="Whitehead S."/>
            <person name="Barrell B.G."/>
            <person name="Maskell D.J."/>
        </authorList>
    </citation>
    <scope>NUCLEOTIDE SEQUENCE [LARGE SCALE GENOMIC DNA]</scope>
    <source>
        <strain>Tohama I / ATCC BAA-589 / NCTC 13251</strain>
    </source>
</reference>
<keyword id="KW-0378">Hydrolase</keyword>
<keyword id="KW-1185">Reference proteome</keyword>
<evidence type="ECO:0000255" key="1">
    <source>
        <dbReference type="HAMAP-Rule" id="MF_01212"/>
    </source>
</evidence>
<evidence type="ECO:0000255" key="2">
    <source>
        <dbReference type="PROSITE-ProRule" id="PRU01175"/>
    </source>
</evidence>
<evidence type="ECO:0000256" key="3">
    <source>
        <dbReference type="SAM" id="MobiDB-lite"/>
    </source>
</evidence>
<gene>
    <name type="ordered locus">BP3658</name>
</gene>
<protein>
    <recommendedName>
        <fullName evidence="1">Deoxyguanosinetriphosphate triphosphohydrolase-like protein</fullName>
    </recommendedName>
</protein>
<organism>
    <name type="scientific">Bordetella pertussis (strain Tohama I / ATCC BAA-589 / NCTC 13251)</name>
    <dbReference type="NCBI Taxonomy" id="257313"/>
    <lineage>
        <taxon>Bacteria</taxon>
        <taxon>Pseudomonadati</taxon>
        <taxon>Pseudomonadota</taxon>
        <taxon>Betaproteobacteria</taxon>
        <taxon>Burkholderiales</taxon>
        <taxon>Alcaligenaceae</taxon>
        <taxon>Bordetella</taxon>
    </lineage>
</organism>
<sequence length="384" mass="43949">MNKDGTVVLMNELASYASDPSKTRGRRHSEPPPENRTEFQRDRDRIIHSNAFRRLEYKTQVFVNHEGDLFRTRLTHSLEVAQIARTLARSLRVSEDLTEAIALAHDLGHTPFGHAGQDELNACMRELAPQAGGFEHNLQSLRVVDELEERYAEFNGLNLCFETREGILKHCSATHARQLGAVGERFLDRTQPSLEAQLANLADEVAYNNHDVDDGLRSGLITLEQLQEVGIFARHYAEVARRYPQLAPRRATSETIRRMINTLIVDLTATSLARIRDHAPASADDVRRAPPLAGFSAAVRREADELKKFLFDNLYRHYRVVRMTTKAQRIVRELFQAFLGDPRLLPPDYRREQPQDQARAISDYIAGMTDRYAIREHRRLFEMG</sequence>
<dbReference type="EMBL" id="BX640422">
    <property type="protein sequence ID" value="CAE43915.1"/>
    <property type="molecule type" value="Genomic_DNA"/>
</dbReference>
<dbReference type="RefSeq" id="NP_882166.1">
    <property type="nucleotide sequence ID" value="NC_002929.2"/>
</dbReference>
<dbReference type="RefSeq" id="WP_003806949.1">
    <property type="nucleotide sequence ID" value="NZ_CP039022.1"/>
</dbReference>
<dbReference type="SMR" id="Q7VT92"/>
<dbReference type="STRING" id="257313.BP3658"/>
<dbReference type="PaxDb" id="257313-BP3658"/>
<dbReference type="KEGG" id="bpe:BP3658"/>
<dbReference type="PATRIC" id="fig|257313.5.peg.3956"/>
<dbReference type="eggNOG" id="COG0232">
    <property type="taxonomic scope" value="Bacteria"/>
</dbReference>
<dbReference type="HOGENOM" id="CLU_028163_1_0_4"/>
<dbReference type="Proteomes" id="UP000002676">
    <property type="component" value="Chromosome"/>
</dbReference>
<dbReference type="GO" id="GO:0008832">
    <property type="term" value="F:dGTPase activity"/>
    <property type="evidence" value="ECO:0007669"/>
    <property type="project" value="TreeGrafter"/>
</dbReference>
<dbReference type="GO" id="GO:0006203">
    <property type="term" value="P:dGTP catabolic process"/>
    <property type="evidence" value="ECO:0007669"/>
    <property type="project" value="TreeGrafter"/>
</dbReference>
<dbReference type="CDD" id="cd00077">
    <property type="entry name" value="HDc"/>
    <property type="match status" value="1"/>
</dbReference>
<dbReference type="FunFam" id="1.10.3210.10:FF:000024">
    <property type="entry name" value="Deoxyguanosinetriphosphate triphosphohydrolase-like protein"/>
    <property type="match status" value="1"/>
</dbReference>
<dbReference type="Gene3D" id="1.10.3210.10">
    <property type="entry name" value="Hypothetical protein af1432"/>
    <property type="match status" value="1"/>
</dbReference>
<dbReference type="HAMAP" id="MF_01212">
    <property type="entry name" value="dGTPase_type2"/>
    <property type="match status" value="1"/>
</dbReference>
<dbReference type="InterPro" id="IPR006261">
    <property type="entry name" value="dGTPase"/>
</dbReference>
<dbReference type="InterPro" id="IPR050135">
    <property type="entry name" value="dGTPase-like"/>
</dbReference>
<dbReference type="InterPro" id="IPR023023">
    <property type="entry name" value="dNTPase_2"/>
</dbReference>
<dbReference type="InterPro" id="IPR003607">
    <property type="entry name" value="HD/PDEase_dom"/>
</dbReference>
<dbReference type="InterPro" id="IPR006674">
    <property type="entry name" value="HD_domain"/>
</dbReference>
<dbReference type="InterPro" id="IPR026875">
    <property type="entry name" value="PHydrolase_assoc_dom"/>
</dbReference>
<dbReference type="NCBIfam" id="TIGR01353">
    <property type="entry name" value="dGTP_triPase"/>
    <property type="match status" value="1"/>
</dbReference>
<dbReference type="NCBIfam" id="NF002326">
    <property type="entry name" value="PRK01286.1-1"/>
    <property type="match status" value="1"/>
</dbReference>
<dbReference type="PANTHER" id="PTHR11373:SF43">
    <property type="entry name" value="DEOXYGUANOSINETRIPHOSPHATE TRIPHOSPHOHYDROLASE-LIKE PROTEIN"/>
    <property type="match status" value="1"/>
</dbReference>
<dbReference type="PANTHER" id="PTHR11373">
    <property type="entry name" value="DEOXYNUCLEOSIDE TRIPHOSPHATE TRIPHOSPHOHYDROLASE"/>
    <property type="match status" value="1"/>
</dbReference>
<dbReference type="Pfam" id="PF01966">
    <property type="entry name" value="HD"/>
    <property type="match status" value="1"/>
</dbReference>
<dbReference type="Pfam" id="PF13286">
    <property type="entry name" value="HD_assoc"/>
    <property type="match status" value="1"/>
</dbReference>
<dbReference type="SMART" id="SM00471">
    <property type="entry name" value="HDc"/>
    <property type="match status" value="1"/>
</dbReference>
<dbReference type="SUPFAM" id="SSF109604">
    <property type="entry name" value="HD-domain/PDEase-like"/>
    <property type="match status" value="1"/>
</dbReference>
<dbReference type="PROSITE" id="PS51831">
    <property type="entry name" value="HD"/>
    <property type="match status" value="1"/>
</dbReference>
<feature type="chain" id="PRO_0000205294" description="Deoxyguanosinetriphosphate triphosphohydrolase-like protein">
    <location>
        <begin position="1"/>
        <end position="384"/>
    </location>
</feature>
<feature type="domain" description="HD" evidence="2">
    <location>
        <begin position="73"/>
        <end position="208"/>
    </location>
</feature>
<feature type="region of interest" description="Disordered" evidence="3">
    <location>
        <begin position="13"/>
        <end position="42"/>
    </location>
</feature>
<feature type="compositionally biased region" description="Basic and acidic residues" evidence="3">
    <location>
        <begin position="28"/>
        <end position="42"/>
    </location>
</feature>
<proteinExistence type="inferred from homology"/>
<accession>Q7VT92</accession>